<dbReference type="EC" id="6.1.1.3" evidence="1"/>
<dbReference type="EMBL" id="AP009324">
    <property type="protein sequence ID" value="BAF78552.1"/>
    <property type="molecule type" value="Genomic_DNA"/>
</dbReference>
<dbReference type="RefSeq" id="WP_000435143.1">
    <property type="nucleotide sequence ID" value="NC_009782.1"/>
</dbReference>
<dbReference type="SMR" id="A7X3A6"/>
<dbReference type="KEGG" id="saw:SAHV_1669"/>
<dbReference type="HOGENOM" id="CLU_008554_0_1_9"/>
<dbReference type="GO" id="GO:0005737">
    <property type="term" value="C:cytoplasm"/>
    <property type="evidence" value="ECO:0007669"/>
    <property type="project" value="UniProtKB-SubCell"/>
</dbReference>
<dbReference type="GO" id="GO:0005524">
    <property type="term" value="F:ATP binding"/>
    <property type="evidence" value="ECO:0007669"/>
    <property type="project" value="UniProtKB-UniRule"/>
</dbReference>
<dbReference type="GO" id="GO:0140096">
    <property type="term" value="F:catalytic activity, acting on a protein"/>
    <property type="evidence" value="ECO:0007669"/>
    <property type="project" value="UniProtKB-ARBA"/>
</dbReference>
<dbReference type="GO" id="GO:0046872">
    <property type="term" value="F:metal ion binding"/>
    <property type="evidence" value="ECO:0007669"/>
    <property type="project" value="UniProtKB-KW"/>
</dbReference>
<dbReference type="GO" id="GO:0004829">
    <property type="term" value="F:threonine-tRNA ligase activity"/>
    <property type="evidence" value="ECO:0007669"/>
    <property type="project" value="UniProtKB-UniRule"/>
</dbReference>
<dbReference type="GO" id="GO:0016740">
    <property type="term" value="F:transferase activity"/>
    <property type="evidence" value="ECO:0007669"/>
    <property type="project" value="UniProtKB-ARBA"/>
</dbReference>
<dbReference type="GO" id="GO:0000049">
    <property type="term" value="F:tRNA binding"/>
    <property type="evidence" value="ECO:0007669"/>
    <property type="project" value="UniProtKB-KW"/>
</dbReference>
<dbReference type="GO" id="GO:0006435">
    <property type="term" value="P:threonyl-tRNA aminoacylation"/>
    <property type="evidence" value="ECO:0007669"/>
    <property type="project" value="UniProtKB-UniRule"/>
</dbReference>
<dbReference type="CDD" id="cd01667">
    <property type="entry name" value="TGS_ThrRS"/>
    <property type="match status" value="1"/>
</dbReference>
<dbReference type="CDD" id="cd00860">
    <property type="entry name" value="ThrRS_anticodon"/>
    <property type="match status" value="1"/>
</dbReference>
<dbReference type="CDD" id="cd00771">
    <property type="entry name" value="ThrRS_core"/>
    <property type="match status" value="1"/>
</dbReference>
<dbReference type="FunFam" id="3.10.20.30:FF:000005">
    <property type="entry name" value="Threonine--tRNA ligase"/>
    <property type="match status" value="1"/>
</dbReference>
<dbReference type="FunFam" id="3.30.54.20:FF:000002">
    <property type="entry name" value="Threonine--tRNA ligase"/>
    <property type="match status" value="1"/>
</dbReference>
<dbReference type="FunFam" id="3.30.930.10:FF:000002">
    <property type="entry name" value="Threonine--tRNA ligase"/>
    <property type="match status" value="1"/>
</dbReference>
<dbReference type="FunFam" id="3.40.50.800:FF:000001">
    <property type="entry name" value="Threonine--tRNA ligase"/>
    <property type="match status" value="1"/>
</dbReference>
<dbReference type="FunFam" id="3.30.980.10:FF:000005">
    <property type="entry name" value="Threonyl-tRNA synthetase, mitochondrial"/>
    <property type="match status" value="1"/>
</dbReference>
<dbReference type="Gene3D" id="3.10.20.30">
    <property type="match status" value="1"/>
</dbReference>
<dbReference type="Gene3D" id="3.30.54.20">
    <property type="match status" value="1"/>
</dbReference>
<dbReference type="Gene3D" id="3.40.50.800">
    <property type="entry name" value="Anticodon-binding domain"/>
    <property type="match status" value="1"/>
</dbReference>
<dbReference type="Gene3D" id="3.30.930.10">
    <property type="entry name" value="Bira Bifunctional Protein, Domain 2"/>
    <property type="match status" value="1"/>
</dbReference>
<dbReference type="Gene3D" id="3.30.980.10">
    <property type="entry name" value="Threonyl-trna Synthetase, Chain A, domain 2"/>
    <property type="match status" value="1"/>
</dbReference>
<dbReference type="HAMAP" id="MF_00184">
    <property type="entry name" value="Thr_tRNA_synth"/>
    <property type="match status" value="1"/>
</dbReference>
<dbReference type="InterPro" id="IPR002314">
    <property type="entry name" value="aa-tRNA-synt_IIb"/>
</dbReference>
<dbReference type="InterPro" id="IPR006195">
    <property type="entry name" value="aa-tRNA-synth_II"/>
</dbReference>
<dbReference type="InterPro" id="IPR045864">
    <property type="entry name" value="aa-tRNA-synth_II/BPL/LPL"/>
</dbReference>
<dbReference type="InterPro" id="IPR004154">
    <property type="entry name" value="Anticodon-bd"/>
</dbReference>
<dbReference type="InterPro" id="IPR036621">
    <property type="entry name" value="Anticodon-bd_dom_sf"/>
</dbReference>
<dbReference type="InterPro" id="IPR012675">
    <property type="entry name" value="Beta-grasp_dom_sf"/>
</dbReference>
<dbReference type="InterPro" id="IPR004095">
    <property type="entry name" value="TGS"/>
</dbReference>
<dbReference type="InterPro" id="IPR012676">
    <property type="entry name" value="TGS-like"/>
</dbReference>
<dbReference type="InterPro" id="IPR002320">
    <property type="entry name" value="Thr-tRNA-ligase_IIa"/>
</dbReference>
<dbReference type="InterPro" id="IPR018163">
    <property type="entry name" value="Thr/Ala-tRNA-synth_IIc_edit"/>
</dbReference>
<dbReference type="InterPro" id="IPR047246">
    <property type="entry name" value="ThrRS_anticodon"/>
</dbReference>
<dbReference type="InterPro" id="IPR033728">
    <property type="entry name" value="ThrRS_core"/>
</dbReference>
<dbReference type="InterPro" id="IPR012947">
    <property type="entry name" value="tRNA_SAD"/>
</dbReference>
<dbReference type="NCBIfam" id="TIGR00418">
    <property type="entry name" value="thrS"/>
    <property type="match status" value="1"/>
</dbReference>
<dbReference type="PANTHER" id="PTHR11451:SF56">
    <property type="entry name" value="THREONINE--TRNA LIGASE 1"/>
    <property type="match status" value="1"/>
</dbReference>
<dbReference type="PANTHER" id="PTHR11451">
    <property type="entry name" value="THREONINE-TRNA LIGASE"/>
    <property type="match status" value="1"/>
</dbReference>
<dbReference type="Pfam" id="PF03129">
    <property type="entry name" value="HGTP_anticodon"/>
    <property type="match status" value="1"/>
</dbReference>
<dbReference type="Pfam" id="PF02824">
    <property type="entry name" value="TGS"/>
    <property type="match status" value="1"/>
</dbReference>
<dbReference type="Pfam" id="PF00587">
    <property type="entry name" value="tRNA-synt_2b"/>
    <property type="match status" value="1"/>
</dbReference>
<dbReference type="Pfam" id="PF07973">
    <property type="entry name" value="tRNA_SAD"/>
    <property type="match status" value="1"/>
</dbReference>
<dbReference type="PRINTS" id="PR01047">
    <property type="entry name" value="TRNASYNTHTHR"/>
</dbReference>
<dbReference type="SMART" id="SM00863">
    <property type="entry name" value="tRNA_SAD"/>
    <property type="match status" value="1"/>
</dbReference>
<dbReference type="SUPFAM" id="SSF52954">
    <property type="entry name" value="Class II aaRS ABD-related"/>
    <property type="match status" value="1"/>
</dbReference>
<dbReference type="SUPFAM" id="SSF55681">
    <property type="entry name" value="Class II aaRS and biotin synthetases"/>
    <property type="match status" value="1"/>
</dbReference>
<dbReference type="SUPFAM" id="SSF81271">
    <property type="entry name" value="TGS-like"/>
    <property type="match status" value="1"/>
</dbReference>
<dbReference type="SUPFAM" id="SSF55186">
    <property type="entry name" value="ThrRS/AlaRS common domain"/>
    <property type="match status" value="1"/>
</dbReference>
<dbReference type="PROSITE" id="PS50862">
    <property type="entry name" value="AA_TRNA_LIGASE_II"/>
    <property type="match status" value="1"/>
</dbReference>
<dbReference type="PROSITE" id="PS51880">
    <property type="entry name" value="TGS"/>
    <property type="match status" value="1"/>
</dbReference>
<reference key="1">
    <citation type="journal article" date="2008" name="Antimicrob. Agents Chemother.">
        <title>Mutated response regulator graR is responsible for phenotypic conversion of Staphylococcus aureus from heterogeneous vancomycin-intermediate resistance to vancomycin-intermediate resistance.</title>
        <authorList>
            <person name="Neoh H.-M."/>
            <person name="Cui L."/>
            <person name="Yuzawa H."/>
            <person name="Takeuchi F."/>
            <person name="Matsuo M."/>
            <person name="Hiramatsu K."/>
        </authorList>
    </citation>
    <scope>NUCLEOTIDE SEQUENCE [LARGE SCALE GENOMIC DNA]</scope>
    <source>
        <strain>Mu3 / ATCC 700698</strain>
    </source>
</reference>
<gene>
    <name evidence="1" type="primary">thrS</name>
    <name type="ordered locus">SAHV_1669</name>
</gene>
<protein>
    <recommendedName>
        <fullName evidence="1">Threonine--tRNA ligase</fullName>
        <ecNumber evidence="1">6.1.1.3</ecNumber>
    </recommendedName>
    <alternativeName>
        <fullName evidence="1">Threonyl-tRNA synthetase</fullName>
        <shortName evidence="1">ThrRS</shortName>
    </alternativeName>
</protein>
<keyword id="KW-0030">Aminoacyl-tRNA synthetase</keyword>
<keyword id="KW-0067">ATP-binding</keyword>
<keyword id="KW-0963">Cytoplasm</keyword>
<keyword id="KW-0436">Ligase</keyword>
<keyword id="KW-0479">Metal-binding</keyword>
<keyword id="KW-0547">Nucleotide-binding</keyword>
<keyword id="KW-0648">Protein biosynthesis</keyword>
<keyword id="KW-0694">RNA-binding</keyword>
<keyword id="KW-0820">tRNA-binding</keyword>
<keyword id="KW-0862">Zinc</keyword>
<proteinExistence type="inferred from homology"/>
<sequence length="645" mass="74388">MEQINIQFPDGNKKAFDKGTTTEDIAQSISPGLRKKAVAGKFNGQLVDLTKPLETDGSIGIVTPGSEEALEVLRHSTAHLMAHAIKRLYGNVKFGVGPVIEGGFYYDFDIDQNISSDDFEQIEKTMKQIVNENMKIERKVVSRDEAKELFSNDEYKLELIDAIPEDENVTLYSQGDFTDLCRGVHVPSTAKIKEFKLLSTAGAYWRGDSNNKMLQRIYGTAFFDKKELKAHLQMLEERKERDHRKIGKELELFTNSQLVGAGLPLWLPNGATIRREIERYIVDKEVSMGYDHVYTPVLANVDLYKTSGHWDHYQEDMFPPMQLDETESMVLRPMNCPHHMMIYANKPHSYRELPIRIAELGTMHRYEASGAVSGLQRVRGMTLNDSHIFVRPDQIKEEFKRVVNMIIDVYKDFGFEDYSFRLSYRDPEDKEKYFDDDDMWNKAENMLKEAADELGLSYEEAIGEAAFYGPKLDVQVKTAMGKEETLSTAQLDFLLPERFDLTYIGQDGEHHRPVVIHRGVVSTMERFVAFLTEETKGAFPTWLAPKQVQIIPVNVDLHYDYARQLQDELKSQGVRVSIDDRNEKMGYKIREAQMQKIPYQIVVGDKEVENNQVNVRQYGSQDQETVEKDEFIWNLVDEIRLKKHR</sequence>
<accession>A7X3A6</accession>
<comment type="function">
    <text evidence="1">Catalyzes the attachment of threonine to tRNA(Thr) in a two-step reaction: L-threonine is first activated by ATP to form Thr-AMP and then transferred to the acceptor end of tRNA(Thr). Also edits incorrectly charged L-seryl-tRNA(Thr).</text>
</comment>
<comment type="catalytic activity">
    <reaction evidence="1">
        <text>tRNA(Thr) + L-threonine + ATP = L-threonyl-tRNA(Thr) + AMP + diphosphate + H(+)</text>
        <dbReference type="Rhea" id="RHEA:24624"/>
        <dbReference type="Rhea" id="RHEA-COMP:9670"/>
        <dbReference type="Rhea" id="RHEA-COMP:9704"/>
        <dbReference type="ChEBI" id="CHEBI:15378"/>
        <dbReference type="ChEBI" id="CHEBI:30616"/>
        <dbReference type="ChEBI" id="CHEBI:33019"/>
        <dbReference type="ChEBI" id="CHEBI:57926"/>
        <dbReference type="ChEBI" id="CHEBI:78442"/>
        <dbReference type="ChEBI" id="CHEBI:78534"/>
        <dbReference type="ChEBI" id="CHEBI:456215"/>
        <dbReference type="EC" id="6.1.1.3"/>
    </reaction>
</comment>
<comment type="cofactor">
    <cofactor evidence="1">
        <name>Zn(2+)</name>
        <dbReference type="ChEBI" id="CHEBI:29105"/>
    </cofactor>
    <text evidence="1">Binds 1 zinc ion per subunit.</text>
</comment>
<comment type="subunit">
    <text evidence="1">Homodimer.</text>
</comment>
<comment type="subcellular location">
    <subcellularLocation>
        <location evidence="1">Cytoplasm</location>
    </subcellularLocation>
</comment>
<comment type="similarity">
    <text evidence="1">Belongs to the class-II aminoacyl-tRNA synthetase family.</text>
</comment>
<evidence type="ECO:0000255" key="1">
    <source>
        <dbReference type="HAMAP-Rule" id="MF_00184"/>
    </source>
</evidence>
<evidence type="ECO:0000255" key="2">
    <source>
        <dbReference type="PROSITE-ProRule" id="PRU01228"/>
    </source>
</evidence>
<name>SYT_STAA1</name>
<feature type="chain" id="PRO_1000020519" description="Threonine--tRNA ligase">
    <location>
        <begin position="1"/>
        <end position="645"/>
    </location>
</feature>
<feature type="domain" description="TGS" evidence="2">
    <location>
        <begin position="1"/>
        <end position="63"/>
    </location>
</feature>
<feature type="region of interest" description="Catalytic" evidence="1">
    <location>
        <begin position="242"/>
        <end position="540"/>
    </location>
</feature>
<feature type="binding site" evidence="1">
    <location>
        <position position="336"/>
    </location>
    <ligand>
        <name>Zn(2+)</name>
        <dbReference type="ChEBI" id="CHEBI:29105"/>
    </ligand>
</feature>
<feature type="binding site" evidence="1">
    <location>
        <position position="387"/>
    </location>
    <ligand>
        <name>Zn(2+)</name>
        <dbReference type="ChEBI" id="CHEBI:29105"/>
    </ligand>
</feature>
<feature type="binding site" evidence="1">
    <location>
        <position position="517"/>
    </location>
    <ligand>
        <name>Zn(2+)</name>
        <dbReference type="ChEBI" id="CHEBI:29105"/>
    </ligand>
</feature>
<organism>
    <name type="scientific">Staphylococcus aureus (strain Mu3 / ATCC 700698)</name>
    <dbReference type="NCBI Taxonomy" id="418127"/>
    <lineage>
        <taxon>Bacteria</taxon>
        <taxon>Bacillati</taxon>
        <taxon>Bacillota</taxon>
        <taxon>Bacilli</taxon>
        <taxon>Bacillales</taxon>
        <taxon>Staphylococcaceae</taxon>
        <taxon>Staphylococcus</taxon>
    </lineage>
</organism>